<organism>
    <name type="scientific">Mus musculus</name>
    <name type="common">Mouse</name>
    <dbReference type="NCBI Taxonomy" id="10090"/>
    <lineage>
        <taxon>Eukaryota</taxon>
        <taxon>Metazoa</taxon>
        <taxon>Chordata</taxon>
        <taxon>Craniata</taxon>
        <taxon>Vertebrata</taxon>
        <taxon>Euteleostomi</taxon>
        <taxon>Mammalia</taxon>
        <taxon>Eutheria</taxon>
        <taxon>Euarchontoglires</taxon>
        <taxon>Glires</taxon>
        <taxon>Rodentia</taxon>
        <taxon>Myomorpha</taxon>
        <taxon>Muroidea</taxon>
        <taxon>Muridae</taxon>
        <taxon>Murinae</taxon>
        <taxon>Mus</taxon>
        <taxon>Mus</taxon>
    </lineage>
</organism>
<gene>
    <name type="primary">Fgf12</name>
    <name type="synonym">Fhf1</name>
</gene>
<sequence>MAAAIASSLIRQKRQARESNSDRVSASKRRSSPSKDGRSLCERHVLGVFSKVRFCSGRKRPVRRRPEPQLKGIVTRLFSQQGYFLQMHPDGTIDGTKDENSDYTLFNLIPVGLRVVAIQGVKASLYVAMNGEGYLYSSDVFTPECKFKESVFENYYVIYSSTLYRQQESGRAWFLGLNKEGQIMKGNRVKKTKPSSHFVPKPIEVCMYREPSLHEIGEKQGRSRKSSGTPTMNGGKVVNQDST</sequence>
<name>FGF12_MOUSE</name>
<protein>
    <recommendedName>
        <fullName>Fibroblast growth factor 12</fullName>
        <shortName>FGF-12</shortName>
    </recommendedName>
    <alternativeName>
        <fullName>Fibroblast growth factor homologous factor 1</fullName>
        <shortName>FHF-1</shortName>
    </alternativeName>
    <alternativeName>
        <fullName>Myocyte-activating factor</fullName>
    </alternativeName>
</protein>
<evidence type="ECO:0000250" key="1"/>
<evidence type="ECO:0000250" key="2">
    <source>
        <dbReference type="UniProtKB" id="P61328"/>
    </source>
</evidence>
<evidence type="ECO:0000255" key="3"/>
<evidence type="ECO:0000256" key="4">
    <source>
        <dbReference type="SAM" id="MobiDB-lite"/>
    </source>
</evidence>
<evidence type="ECO:0000303" key="5">
    <source>
    </source>
</evidence>
<evidence type="ECO:0000305" key="6"/>
<dbReference type="EMBL" id="U66201">
    <property type="protein sequence ID" value="AAB18917.1"/>
    <property type="molecule type" value="mRNA"/>
</dbReference>
<dbReference type="EMBL" id="AF020738">
    <property type="protein sequence ID" value="AAB71607.1"/>
    <property type="molecule type" value="mRNA"/>
</dbReference>
<dbReference type="EMBL" id="AK034335">
    <property type="protein sequence ID" value="BAC28679.1"/>
    <property type="molecule type" value="mRNA"/>
</dbReference>
<dbReference type="EMBL" id="BC030485">
    <property type="protein sequence ID" value="AAH30485.1"/>
    <property type="molecule type" value="mRNA"/>
</dbReference>
<dbReference type="CCDS" id="CCDS28092.1">
    <molecule id="P61329-1"/>
</dbReference>
<dbReference type="CCDS" id="CCDS88909.1">
    <molecule id="P61329-2"/>
</dbReference>
<dbReference type="RefSeq" id="NP_001263348.1">
    <property type="nucleotide sequence ID" value="NM_001276419.2"/>
</dbReference>
<dbReference type="RefSeq" id="NP_034329.1">
    <molecule id="P61329-2"/>
    <property type="nucleotide sequence ID" value="NM_010199.4"/>
</dbReference>
<dbReference type="RefSeq" id="NP_898887.1">
    <molecule id="P61329-1"/>
    <property type="nucleotide sequence ID" value="NM_183064.5"/>
</dbReference>
<dbReference type="SMR" id="P61329"/>
<dbReference type="BioGRID" id="199641">
    <property type="interactions" value="11"/>
</dbReference>
<dbReference type="FunCoup" id="P61329">
    <property type="interactions" value="1993"/>
</dbReference>
<dbReference type="STRING" id="10090.ENSMUSP00000097601"/>
<dbReference type="iPTMnet" id="P61329"/>
<dbReference type="PhosphoSitePlus" id="P61329"/>
<dbReference type="SwissPalm" id="P61329"/>
<dbReference type="PaxDb" id="10090-ENSMUSP00000097601"/>
<dbReference type="PeptideAtlas" id="P61329"/>
<dbReference type="ProteomicsDB" id="267464">
    <molecule id="P61329-1"/>
</dbReference>
<dbReference type="ProteomicsDB" id="267465">
    <molecule id="P61329-2"/>
</dbReference>
<dbReference type="ABCD" id="P61329">
    <property type="antibodies" value="1 sequenced antibody"/>
</dbReference>
<dbReference type="Antibodypedia" id="33876">
    <property type="antibodies" value="250 antibodies from 33 providers"/>
</dbReference>
<dbReference type="DNASU" id="14167"/>
<dbReference type="Ensembl" id="ENSMUST00000100024.3">
    <molecule id="P61329-1"/>
    <property type="protein sequence ID" value="ENSMUSP00000097601.2"/>
    <property type="gene ID" value="ENSMUSG00000022523.11"/>
</dbReference>
<dbReference type="Ensembl" id="ENSMUST00000232352.2">
    <molecule id="P61329-2"/>
    <property type="protein sequence ID" value="ENSMUSP00000155924.2"/>
    <property type="gene ID" value="ENSMUSG00000022523.11"/>
</dbReference>
<dbReference type="GeneID" id="14167"/>
<dbReference type="KEGG" id="mmu:14167"/>
<dbReference type="UCSC" id="uc007yvr.3">
    <molecule id="P61329-1"/>
    <property type="organism name" value="mouse"/>
</dbReference>
<dbReference type="UCSC" id="uc007yvt.3">
    <molecule id="P61329-2"/>
    <property type="organism name" value="mouse"/>
</dbReference>
<dbReference type="AGR" id="MGI:109183"/>
<dbReference type="CTD" id="2257"/>
<dbReference type="MGI" id="MGI:109183">
    <property type="gene designation" value="Fgf12"/>
</dbReference>
<dbReference type="VEuPathDB" id="HostDB:ENSMUSG00000022523"/>
<dbReference type="eggNOG" id="KOG3885">
    <property type="taxonomic scope" value="Eukaryota"/>
</dbReference>
<dbReference type="GeneTree" id="ENSGT00940000155929"/>
<dbReference type="HOGENOM" id="CLU_081609_2_0_1"/>
<dbReference type="InParanoid" id="P61329"/>
<dbReference type="OMA" id="LWIKSRH"/>
<dbReference type="OrthoDB" id="6158176at2759"/>
<dbReference type="PhylomeDB" id="P61329"/>
<dbReference type="TreeFam" id="TF330751"/>
<dbReference type="BioGRID-ORCS" id="14167">
    <property type="hits" value="4 hits in 79 CRISPR screens"/>
</dbReference>
<dbReference type="ChiTaRS" id="Fgf12">
    <property type="organism name" value="mouse"/>
</dbReference>
<dbReference type="PRO" id="PR:P61329"/>
<dbReference type="Proteomes" id="UP000000589">
    <property type="component" value="Chromosome 16"/>
</dbReference>
<dbReference type="RNAct" id="P61329">
    <property type="molecule type" value="protein"/>
</dbReference>
<dbReference type="Bgee" id="ENSMUSG00000022523">
    <property type="expression patterns" value="Expressed in superior frontal gyrus and 169 other cell types or tissues"/>
</dbReference>
<dbReference type="ExpressionAtlas" id="P61329">
    <property type="expression patterns" value="baseline and differential"/>
</dbReference>
<dbReference type="GO" id="GO:0005634">
    <property type="term" value="C:nucleus"/>
    <property type="evidence" value="ECO:0000266"/>
    <property type="project" value="MGI"/>
</dbReference>
<dbReference type="GO" id="GO:0045202">
    <property type="term" value="C:synapse"/>
    <property type="evidence" value="ECO:0007669"/>
    <property type="project" value="GOC"/>
</dbReference>
<dbReference type="GO" id="GO:0008083">
    <property type="term" value="F:growth factor activity"/>
    <property type="evidence" value="ECO:0007669"/>
    <property type="project" value="UniProtKB-KW"/>
</dbReference>
<dbReference type="GO" id="GO:0008201">
    <property type="term" value="F:heparin binding"/>
    <property type="evidence" value="ECO:0000266"/>
    <property type="project" value="MGI"/>
</dbReference>
<dbReference type="GO" id="GO:0008344">
    <property type="term" value="P:adult locomotory behavior"/>
    <property type="evidence" value="ECO:0000316"/>
    <property type="project" value="MGI"/>
</dbReference>
<dbReference type="GO" id="GO:0007268">
    <property type="term" value="P:chemical synaptic transmission"/>
    <property type="evidence" value="ECO:0000316"/>
    <property type="project" value="MGI"/>
</dbReference>
<dbReference type="GO" id="GO:0007254">
    <property type="term" value="P:JNK cascade"/>
    <property type="evidence" value="ECO:0000266"/>
    <property type="project" value="MGI"/>
</dbReference>
<dbReference type="GO" id="GO:0050905">
    <property type="term" value="P:neuromuscular process"/>
    <property type="evidence" value="ECO:0000316"/>
    <property type="project" value="MGI"/>
</dbReference>
<dbReference type="GO" id="GO:0010765">
    <property type="term" value="P:positive regulation of sodium ion transport"/>
    <property type="evidence" value="ECO:0000316"/>
    <property type="project" value="MGI"/>
</dbReference>
<dbReference type="GO" id="GO:0098908">
    <property type="term" value="P:regulation of neuronal action potential"/>
    <property type="evidence" value="ECO:0000250"/>
    <property type="project" value="UniProtKB"/>
</dbReference>
<dbReference type="GO" id="GO:1905150">
    <property type="term" value="P:regulation of voltage-gated sodium channel activity"/>
    <property type="evidence" value="ECO:0000250"/>
    <property type="project" value="UniProtKB"/>
</dbReference>
<dbReference type="CDD" id="cd23328">
    <property type="entry name" value="beta-trefoil_FGF12"/>
    <property type="match status" value="1"/>
</dbReference>
<dbReference type="FunFam" id="2.80.10.50:FF:000001">
    <property type="entry name" value="Fibroblast growth factor"/>
    <property type="match status" value="1"/>
</dbReference>
<dbReference type="Gene3D" id="2.80.10.50">
    <property type="match status" value="1"/>
</dbReference>
<dbReference type="InterPro" id="IPR002209">
    <property type="entry name" value="Fibroblast_GF_fam"/>
</dbReference>
<dbReference type="InterPro" id="IPR008996">
    <property type="entry name" value="IL1/FGF"/>
</dbReference>
<dbReference type="PANTHER" id="PTHR11486">
    <property type="entry name" value="FIBROBLAST GROWTH FACTOR"/>
    <property type="match status" value="1"/>
</dbReference>
<dbReference type="Pfam" id="PF00167">
    <property type="entry name" value="FGF"/>
    <property type="match status" value="1"/>
</dbReference>
<dbReference type="PRINTS" id="PR00263">
    <property type="entry name" value="HBGFFGF"/>
</dbReference>
<dbReference type="PRINTS" id="PR00262">
    <property type="entry name" value="IL1HBGF"/>
</dbReference>
<dbReference type="SMART" id="SM00442">
    <property type="entry name" value="FGF"/>
    <property type="match status" value="1"/>
</dbReference>
<dbReference type="SUPFAM" id="SSF50353">
    <property type="entry name" value="Cytokine"/>
    <property type="match status" value="1"/>
</dbReference>
<dbReference type="PROSITE" id="PS00247">
    <property type="entry name" value="HBGF_FGF"/>
    <property type="match status" value="1"/>
</dbReference>
<keyword id="KW-0025">Alternative splicing</keyword>
<keyword id="KW-0339">Growth factor</keyword>
<keyword id="KW-0539">Nucleus</keyword>
<keyword id="KW-1185">Reference proteome</keyword>
<comment type="function">
    <text evidence="2">Involved in nervous system development and function. Promote neuronal excitability by elevating the voltage dependence of neuronal sodium channel SCN8A fast inactivation.</text>
</comment>
<comment type="subunit">
    <text evidence="1">Interacts with the C-terminal region of SCN9A.</text>
</comment>
<comment type="subcellular location">
    <subcellularLocation>
        <location evidence="6">Nucleus</location>
    </subcellularLocation>
</comment>
<comment type="alternative products">
    <event type="alternative splicing"/>
    <isoform>
        <id>P61329-1</id>
        <name>1</name>
        <sequence type="displayed"/>
    </isoform>
    <isoform>
        <id>P61329-2</id>
        <name>2</name>
        <sequence type="described" ref="VSP_010223"/>
    </isoform>
</comment>
<comment type="similarity">
    <text evidence="6">Belongs to the heparin-binding growth factors family.</text>
</comment>
<proteinExistence type="evidence at protein level"/>
<feature type="chain" id="PRO_0000147605" description="Fibroblast growth factor 12">
    <location>
        <begin position="1"/>
        <end position="243"/>
    </location>
</feature>
<feature type="region of interest" description="Disordered" evidence="4">
    <location>
        <begin position="1"/>
        <end position="39"/>
    </location>
</feature>
<feature type="region of interest" description="Disordered" evidence="4">
    <location>
        <begin position="216"/>
        <end position="243"/>
    </location>
</feature>
<feature type="short sequence motif" description="Bipartite nuclear localization signal" evidence="3">
    <location>
        <begin position="11"/>
        <end position="38"/>
    </location>
</feature>
<feature type="splice variant" id="VSP_010223" description="In isoform 2." evidence="5">
    <original>MAAAIASSLIRQKRQARESNSDRVSASKRRSSPSKDGRSLCERHVLGVFSKVRFCSGRKRPVRRRP</original>
    <variation>MESK</variation>
    <location>
        <begin position="1"/>
        <end position="66"/>
    </location>
</feature>
<feature type="sequence conflict" description="In Ref. 2; AAB71607." evidence="6" ref="2">
    <original>E</original>
    <variation>D</variation>
    <location>
        <position position="42"/>
    </location>
</feature>
<feature type="sequence conflict" description="In Ref. 2; AAB71607." evidence="6" ref="2">
    <original>Q</original>
    <variation>P</variation>
    <location>
        <position position="182"/>
    </location>
</feature>
<accession>P61329</accession>
<accession>O35339</accession>
<accession>P70376</accession>
<accession>Q924B4</accession>
<accession>Q92912</accession>
<accession>Q93001</accession>
<reference key="1">
    <citation type="journal article" date="1996" name="Proc. Natl. Acad. Sci. U.S.A.">
        <title>Fibroblast growth factor (FGF) homologous factors: new members of the FGF family implicated in nervous system development.</title>
        <authorList>
            <person name="Smallwood P.M."/>
            <person name="Munoz-Sanjuan I."/>
            <person name="Tong P."/>
            <person name="Macke J.P."/>
            <person name="Hendry S.H."/>
            <person name="Gilbert D.J."/>
            <person name="Copeland N.G."/>
            <person name="Jenkins N.A."/>
            <person name="Nathans J."/>
        </authorList>
    </citation>
    <scope>NUCLEOTIDE SEQUENCE [MRNA] (ISOFORM 1)</scope>
    <source>
        <tissue>Retina</tissue>
    </source>
</reference>
<reference key="2">
    <citation type="journal article" date="1997" name="Mech. Dev.">
        <title>Murine FGF-12 and FGF-13: expression in embryonic nervous system, connective tissue and heart.</title>
        <authorList>
            <person name="Hartung H."/>
            <person name="Feldman B."/>
            <person name="Lovec H."/>
            <person name="Coulier F."/>
            <person name="Birnbaum D."/>
            <person name="Goldfarb M."/>
        </authorList>
    </citation>
    <scope>NUCLEOTIDE SEQUENCE [MRNA] (ISOFORM 1)</scope>
</reference>
<reference key="3">
    <citation type="journal article" date="2005" name="Science">
        <title>The transcriptional landscape of the mammalian genome.</title>
        <authorList>
            <person name="Carninci P."/>
            <person name="Kasukawa T."/>
            <person name="Katayama S."/>
            <person name="Gough J."/>
            <person name="Frith M.C."/>
            <person name="Maeda N."/>
            <person name="Oyama R."/>
            <person name="Ravasi T."/>
            <person name="Lenhard B."/>
            <person name="Wells C."/>
            <person name="Kodzius R."/>
            <person name="Shimokawa K."/>
            <person name="Bajic V.B."/>
            <person name="Brenner S.E."/>
            <person name="Batalov S."/>
            <person name="Forrest A.R."/>
            <person name="Zavolan M."/>
            <person name="Davis M.J."/>
            <person name="Wilming L.G."/>
            <person name="Aidinis V."/>
            <person name="Allen J.E."/>
            <person name="Ambesi-Impiombato A."/>
            <person name="Apweiler R."/>
            <person name="Aturaliya R.N."/>
            <person name="Bailey T.L."/>
            <person name="Bansal M."/>
            <person name="Baxter L."/>
            <person name="Beisel K.W."/>
            <person name="Bersano T."/>
            <person name="Bono H."/>
            <person name="Chalk A.M."/>
            <person name="Chiu K.P."/>
            <person name="Choudhary V."/>
            <person name="Christoffels A."/>
            <person name="Clutterbuck D.R."/>
            <person name="Crowe M.L."/>
            <person name="Dalla E."/>
            <person name="Dalrymple B.P."/>
            <person name="de Bono B."/>
            <person name="Della Gatta G."/>
            <person name="di Bernardo D."/>
            <person name="Down T."/>
            <person name="Engstrom P."/>
            <person name="Fagiolini M."/>
            <person name="Faulkner G."/>
            <person name="Fletcher C.F."/>
            <person name="Fukushima T."/>
            <person name="Furuno M."/>
            <person name="Futaki S."/>
            <person name="Gariboldi M."/>
            <person name="Georgii-Hemming P."/>
            <person name="Gingeras T.R."/>
            <person name="Gojobori T."/>
            <person name="Green R.E."/>
            <person name="Gustincich S."/>
            <person name="Harbers M."/>
            <person name="Hayashi Y."/>
            <person name="Hensch T.K."/>
            <person name="Hirokawa N."/>
            <person name="Hill D."/>
            <person name="Huminiecki L."/>
            <person name="Iacono M."/>
            <person name="Ikeo K."/>
            <person name="Iwama A."/>
            <person name="Ishikawa T."/>
            <person name="Jakt M."/>
            <person name="Kanapin A."/>
            <person name="Katoh M."/>
            <person name="Kawasawa Y."/>
            <person name="Kelso J."/>
            <person name="Kitamura H."/>
            <person name="Kitano H."/>
            <person name="Kollias G."/>
            <person name="Krishnan S.P."/>
            <person name="Kruger A."/>
            <person name="Kummerfeld S.K."/>
            <person name="Kurochkin I.V."/>
            <person name="Lareau L.F."/>
            <person name="Lazarevic D."/>
            <person name="Lipovich L."/>
            <person name="Liu J."/>
            <person name="Liuni S."/>
            <person name="McWilliam S."/>
            <person name="Madan Babu M."/>
            <person name="Madera M."/>
            <person name="Marchionni L."/>
            <person name="Matsuda H."/>
            <person name="Matsuzawa S."/>
            <person name="Miki H."/>
            <person name="Mignone F."/>
            <person name="Miyake S."/>
            <person name="Morris K."/>
            <person name="Mottagui-Tabar S."/>
            <person name="Mulder N."/>
            <person name="Nakano N."/>
            <person name="Nakauchi H."/>
            <person name="Ng P."/>
            <person name="Nilsson R."/>
            <person name="Nishiguchi S."/>
            <person name="Nishikawa S."/>
            <person name="Nori F."/>
            <person name="Ohara O."/>
            <person name="Okazaki Y."/>
            <person name="Orlando V."/>
            <person name="Pang K.C."/>
            <person name="Pavan W.J."/>
            <person name="Pavesi G."/>
            <person name="Pesole G."/>
            <person name="Petrovsky N."/>
            <person name="Piazza S."/>
            <person name="Reed J."/>
            <person name="Reid J.F."/>
            <person name="Ring B.Z."/>
            <person name="Ringwald M."/>
            <person name="Rost B."/>
            <person name="Ruan Y."/>
            <person name="Salzberg S.L."/>
            <person name="Sandelin A."/>
            <person name="Schneider C."/>
            <person name="Schoenbach C."/>
            <person name="Sekiguchi K."/>
            <person name="Semple C.A."/>
            <person name="Seno S."/>
            <person name="Sessa L."/>
            <person name="Sheng Y."/>
            <person name="Shibata Y."/>
            <person name="Shimada H."/>
            <person name="Shimada K."/>
            <person name="Silva D."/>
            <person name="Sinclair B."/>
            <person name="Sperling S."/>
            <person name="Stupka E."/>
            <person name="Sugiura K."/>
            <person name="Sultana R."/>
            <person name="Takenaka Y."/>
            <person name="Taki K."/>
            <person name="Tammoja K."/>
            <person name="Tan S.L."/>
            <person name="Tang S."/>
            <person name="Taylor M.S."/>
            <person name="Tegner J."/>
            <person name="Teichmann S.A."/>
            <person name="Ueda H.R."/>
            <person name="van Nimwegen E."/>
            <person name="Verardo R."/>
            <person name="Wei C.L."/>
            <person name="Yagi K."/>
            <person name="Yamanishi H."/>
            <person name="Zabarovsky E."/>
            <person name="Zhu S."/>
            <person name="Zimmer A."/>
            <person name="Hide W."/>
            <person name="Bult C."/>
            <person name="Grimmond S.M."/>
            <person name="Teasdale R.D."/>
            <person name="Liu E.T."/>
            <person name="Brusic V."/>
            <person name="Quackenbush J."/>
            <person name="Wahlestedt C."/>
            <person name="Mattick J.S."/>
            <person name="Hume D.A."/>
            <person name="Kai C."/>
            <person name="Sasaki D."/>
            <person name="Tomaru Y."/>
            <person name="Fukuda S."/>
            <person name="Kanamori-Katayama M."/>
            <person name="Suzuki M."/>
            <person name="Aoki J."/>
            <person name="Arakawa T."/>
            <person name="Iida J."/>
            <person name="Imamura K."/>
            <person name="Itoh M."/>
            <person name="Kato T."/>
            <person name="Kawaji H."/>
            <person name="Kawagashira N."/>
            <person name="Kawashima T."/>
            <person name="Kojima M."/>
            <person name="Kondo S."/>
            <person name="Konno H."/>
            <person name="Nakano K."/>
            <person name="Ninomiya N."/>
            <person name="Nishio T."/>
            <person name="Okada M."/>
            <person name="Plessy C."/>
            <person name="Shibata K."/>
            <person name="Shiraki T."/>
            <person name="Suzuki S."/>
            <person name="Tagami M."/>
            <person name="Waki K."/>
            <person name="Watahiki A."/>
            <person name="Okamura-Oho Y."/>
            <person name="Suzuki H."/>
            <person name="Kawai J."/>
            <person name="Hayashizaki Y."/>
        </authorList>
    </citation>
    <scope>NUCLEOTIDE SEQUENCE [LARGE SCALE MRNA] (ISOFORM 1)</scope>
    <source>
        <strain>C57BL/6J</strain>
        <tissue>Diencephalon</tissue>
    </source>
</reference>
<reference key="4">
    <citation type="journal article" date="2004" name="Genome Res.">
        <title>The status, quality, and expansion of the NIH full-length cDNA project: the Mammalian Gene Collection (MGC).</title>
        <authorList>
            <consortium name="The MGC Project Team"/>
        </authorList>
    </citation>
    <scope>NUCLEOTIDE SEQUENCE [LARGE SCALE MRNA] (ISOFORM 2)</scope>
    <source>
        <tissue>Retina</tissue>
    </source>
</reference>
<reference key="5">
    <citation type="journal article" date="2010" name="Cell">
        <title>A tissue-specific atlas of mouse protein phosphorylation and expression.</title>
        <authorList>
            <person name="Huttlin E.L."/>
            <person name="Jedrychowski M.P."/>
            <person name="Elias J.E."/>
            <person name="Goswami T."/>
            <person name="Rad R."/>
            <person name="Beausoleil S.A."/>
            <person name="Villen J."/>
            <person name="Haas W."/>
            <person name="Sowa M.E."/>
            <person name="Gygi S.P."/>
        </authorList>
    </citation>
    <scope>IDENTIFICATION BY MASS SPECTROMETRY [LARGE SCALE ANALYSIS]</scope>
    <source>
        <tissue>Brain</tissue>
    </source>
</reference>